<dbReference type="EC" id="1.5.1.2" evidence="1"/>
<dbReference type="EMBL" id="CP000029">
    <property type="protein sequence ID" value="AAW54423.1"/>
    <property type="molecule type" value="Genomic_DNA"/>
</dbReference>
<dbReference type="RefSeq" id="WP_001831307.1">
    <property type="nucleotide sequence ID" value="NC_002976.3"/>
</dbReference>
<dbReference type="SMR" id="Q5HP48"/>
<dbReference type="STRING" id="176279.SERP1065"/>
<dbReference type="GeneID" id="50018695"/>
<dbReference type="KEGG" id="ser:SERP1065"/>
<dbReference type="eggNOG" id="COG0345">
    <property type="taxonomic scope" value="Bacteria"/>
</dbReference>
<dbReference type="HOGENOM" id="CLU_042344_0_1_9"/>
<dbReference type="UniPathway" id="UPA00098">
    <property type="reaction ID" value="UER00361"/>
</dbReference>
<dbReference type="Proteomes" id="UP000000531">
    <property type="component" value="Chromosome"/>
</dbReference>
<dbReference type="GO" id="GO:0005737">
    <property type="term" value="C:cytoplasm"/>
    <property type="evidence" value="ECO:0007669"/>
    <property type="project" value="UniProtKB-SubCell"/>
</dbReference>
<dbReference type="GO" id="GO:0004735">
    <property type="term" value="F:pyrroline-5-carboxylate reductase activity"/>
    <property type="evidence" value="ECO:0007669"/>
    <property type="project" value="UniProtKB-UniRule"/>
</dbReference>
<dbReference type="GO" id="GO:0055129">
    <property type="term" value="P:L-proline biosynthetic process"/>
    <property type="evidence" value="ECO:0007669"/>
    <property type="project" value="UniProtKB-UniRule"/>
</dbReference>
<dbReference type="FunFam" id="1.10.3730.10:FF:000001">
    <property type="entry name" value="Pyrroline-5-carboxylate reductase"/>
    <property type="match status" value="1"/>
</dbReference>
<dbReference type="Gene3D" id="3.40.50.720">
    <property type="entry name" value="NAD(P)-binding Rossmann-like Domain"/>
    <property type="match status" value="1"/>
</dbReference>
<dbReference type="Gene3D" id="1.10.3730.10">
    <property type="entry name" value="ProC C-terminal domain-like"/>
    <property type="match status" value="1"/>
</dbReference>
<dbReference type="HAMAP" id="MF_01925">
    <property type="entry name" value="P5C_reductase"/>
    <property type="match status" value="1"/>
</dbReference>
<dbReference type="InterPro" id="IPR008927">
    <property type="entry name" value="6-PGluconate_DH-like_C_sf"/>
</dbReference>
<dbReference type="InterPro" id="IPR036291">
    <property type="entry name" value="NAD(P)-bd_dom_sf"/>
</dbReference>
<dbReference type="InterPro" id="IPR028939">
    <property type="entry name" value="P5C_Rdtase_cat_N"/>
</dbReference>
<dbReference type="InterPro" id="IPR029036">
    <property type="entry name" value="P5CR_dimer"/>
</dbReference>
<dbReference type="InterPro" id="IPR000304">
    <property type="entry name" value="Pyrroline-COOH_reductase"/>
</dbReference>
<dbReference type="NCBIfam" id="TIGR00112">
    <property type="entry name" value="proC"/>
    <property type="match status" value="1"/>
</dbReference>
<dbReference type="PANTHER" id="PTHR11645">
    <property type="entry name" value="PYRROLINE-5-CARBOXYLATE REDUCTASE"/>
    <property type="match status" value="1"/>
</dbReference>
<dbReference type="PANTHER" id="PTHR11645:SF0">
    <property type="entry name" value="PYRROLINE-5-CARBOXYLATE REDUCTASE 3"/>
    <property type="match status" value="1"/>
</dbReference>
<dbReference type="Pfam" id="PF03807">
    <property type="entry name" value="F420_oxidored"/>
    <property type="match status" value="1"/>
</dbReference>
<dbReference type="Pfam" id="PF14748">
    <property type="entry name" value="P5CR_dimer"/>
    <property type="match status" value="1"/>
</dbReference>
<dbReference type="PIRSF" id="PIRSF000193">
    <property type="entry name" value="Pyrrol-5-carb_rd"/>
    <property type="match status" value="1"/>
</dbReference>
<dbReference type="SUPFAM" id="SSF48179">
    <property type="entry name" value="6-phosphogluconate dehydrogenase C-terminal domain-like"/>
    <property type="match status" value="1"/>
</dbReference>
<dbReference type="SUPFAM" id="SSF51735">
    <property type="entry name" value="NAD(P)-binding Rossmann-fold domains"/>
    <property type="match status" value="1"/>
</dbReference>
<keyword id="KW-0028">Amino-acid biosynthesis</keyword>
<keyword id="KW-0963">Cytoplasm</keyword>
<keyword id="KW-0521">NADP</keyword>
<keyword id="KW-0560">Oxidoreductase</keyword>
<keyword id="KW-0641">Proline biosynthesis</keyword>
<keyword id="KW-1185">Reference proteome</keyword>
<name>P5CR_STAEQ</name>
<gene>
    <name evidence="1" type="primary">proC</name>
    <name type="ordered locus">SERP1065</name>
</gene>
<protein>
    <recommendedName>
        <fullName evidence="1">Pyrroline-5-carboxylate reductase</fullName>
        <shortName evidence="1">P5C reductase</shortName>
        <shortName evidence="1">P5CR</shortName>
        <ecNumber evidence="1">1.5.1.2</ecNumber>
    </recommendedName>
    <alternativeName>
        <fullName evidence="1">PCA reductase</fullName>
    </alternativeName>
</protein>
<evidence type="ECO:0000255" key="1">
    <source>
        <dbReference type="HAMAP-Rule" id="MF_01925"/>
    </source>
</evidence>
<feature type="chain" id="PRO_0000187305" description="Pyrroline-5-carboxylate reductase">
    <location>
        <begin position="1"/>
        <end position="271"/>
    </location>
</feature>
<sequence length="271" mass="30111">MKLVFYGAGNMAQAIFTGIINSNNLNANDIYLTNKSNEQALKSFAEKLGVNYSYDDEALLKDADYVFLGTKPHDFENLANRIREHITNDNRFISIMAGLSIDYIRQQLNTNNPLARIMPNTNAQVGHSVTGISFSNNFDPKSKNEVDELINAFGSVIEVSEEHLHQVTAITGSGPAFLYHVFEQYVKAGTELGLERNQVEESIRNLIIGTSKMIERSDLSMSQLRKNITSKGGTTQAGLDALSQYDIVSMFEDCLGAAVNRSMELSHKEDE</sequence>
<reference key="1">
    <citation type="journal article" date="2005" name="J. Bacteriol.">
        <title>Insights on evolution of virulence and resistance from the complete genome analysis of an early methicillin-resistant Staphylococcus aureus strain and a biofilm-producing methicillin-resistant Staphylococcus epidermidis strain.</title>
        <authorList>
            <person name="Gill S.R."/>
            <person name="Fouts D.E."/>
            <person name="Archer G.L."/>
            <person name="Mongodin E.F."/>
            <person name="DeBoy R.T."/>
            <person name="Ravel J."/>
            <person name="Paulsen I.T."/>
            <person name="Kolonay J.F."/>
            <person name="Brinkac L.M."/>
            <person name="Beanan M.J."/>
            <person name="Dodson R.J."/>
            <person name="Daugherty S.C."/>
            <person name="Madupu R."/>
            <person name="Angiuoli S.V."/>
            <person name="Durkin A.S."/>
            <person name="Haft D.H."/>
            <person name="Vamathevan J.J."/>
            <person name="Khouri H."/>
            <person name="Utterback T.R."/>
            <person name="Lee C."/>
            <person name="Dimitrov G."/>
            <person name="Jiang L."/>
            <person name="Qin H."/>
            <person name="Weidman J."/>
            <person name="Tran K."/>
            <person name="Kang K.H."/>
            <person name="Hance I.R."/>
            <person name="Nelson K.E."/>
            <person name="Fraser C.M."/>
        </authorList>
    </citation>
    <scope>NUCLEOTIDE SEQUENCE [LARGE SCALE GENOMIC DNA]</scope>
    <source>
        <strain>ATCC 35984 / DSM 28319 / BCRC 17069 / CCUG 31568 / BM 3577 / RP62A</strain>
    </source>
</reference>
<proteinExistence type="inferred from homology"/>
<comment type="function">
    <text evidence="1">Catalyzes the reduction of 1-pyrroline-5-carboxylate (PCA) to L-proline.</text>
</comment>
<comment type="catalytic activity">
    <reaction evidence="1">
        <text>L-proline + NADP(+) = (S)-1-pyrroline-5-carboxylate + NADPH + 2 H(+)</text>
        <dbReference type="Rhea" id="RHEA:14109"/>
        <dbReference type="ChEBI" id="CHEBI:15378"/>
        <dbReference type="ChEBI" id="CHEBI:17388"/>
        <dbReference type="ChEBI" id="CHEBI:57783"/>
        <dbReference type="ChEBI" id="CHEBI:58349"/>
        <dbReference type="ChEBI" id="CHEBI:60039"/>
        <dbReference type="EC" id="1.5.1.2"/>
    </reaction>
</comment>
<comment type="catalytic activity">
    <reaction evidence="1">
        <text>L-proline + NAD(+) = (S)-1-pyrroline-5-carboxylate + NADH + 2 H(+)</text>
        <dbReference type="Rhea" id="RHEA:14105"/>
        <dbReference type="ChEBI" id="CHEBI:15378"/>
        <dbReference type="ChEBI" id="CHEBI:17388"/>
        <dbReference type="ChEBI" id="CHEBI:57540"/>
        <dbReference type="ChEBI" id="CHEBI:57945"/>
        <dbReference type="ChEBI" id="CHEBI:60039"/>
        <dbReference type="EC" id="1.5.1.2"/>
    </reaction>
</comment>
<comment type="pathway">
    <text evidence="1">Amino-acid biosynthesis; L-proline biosynthesis; L-proline from L-glutamate 5-semialdehyde: step 1/1.</text>
</comment>
<comment type="subcellular location">
    <subcellularLocation>
        <location evidence="1">Cytoplasm</location>
    </subcellularLocation>
</comment>
<comment type="similarity">
    <text evidence="1">Belongs to the pyrroline-5-carboxylate reductase family.</text>
</comment>
<organism>
    <name type="scientific">Staphylococcus epidermidis (strain ATCC 35984 / DSM 28319 / BCRC 17069 / CCUG 31568 / BM 3577 / RP62A)</name>
    <dbReference type="NCBI Taxonomy" id="176279"/>
    <lineage>
        <taxon>Bacteria</taxon>
        <taxon>Bacillati</taxon>
        <taxon>Bacillota</taxon>
        <taxon>Bacilli</taxon>
        <taxon>Bacillales</taxon>
        <taxon>Staphylococcaceae</taxon>
        <taxon>Staphylococcus</taxon>
    </lineage>
</organism>
<accession>Q5HP48</accession>